<name>PAX7_MOUSE</name>
<comment type="function">
    <text evidence="7 8">Transcription factor that is involved in the regulation of muscle stem cells proliferation, playing a role in myogenesis and muscle regeneration.</text>
</comment>
<comment type="subunit">
    <text evidence="1 7">Can bind to DNA as a heterodimer with PAX3. Interacts with DAXX (By similarity). Interacts with PAXBP1; the interaction links PAX7 to a WDR5-containing histone methyltransferase complex (PubMed:22862948).</text>
</comment>
<comment type="subcellular location">
    <subcellularLocation>
        <location evidence="7 8">Nucleus</location>
    </subcellularLocation>
</comment>
<comment type="developmental stage">
    <text evidence="6">Expressed specifically during the development of the nervous and muscular system.</text>
</comment>
<comment type="PTM">
    <text evidence="8">Acetylation at Lys-105 and Lys-139 by KAT8 is required for high-level transcription factor activity (PubMed:34059674). Deacetylated by SIRT2 (PubMed:34059674).</text>
</comment>
<comment type="similarity">
    <text evidence="10">Belongs to the paired homeobox family.</text>
</comment>
<feature type="chain" id="PRO_0000050195" description="Paired box protein Pax-7">
    <location>
        <begin position="1"/>
        <end position="503"/>
    </location>
</feature>
<feature type="DNA-binding region" description="Paired" evidence="4">
    <location>
        <begin position="34"/>
        <end position="161"/>
    </location>
</feature>
<feature type="DNA-binding region" description="Homeobox" evidence="2">
    <location>
        <begin position="215"/>
        <end position="274"/>
    </location>
</feature>
<feature type="region of interest" description="Sufficient to mediate interaction with PAXBP1" evidence="7">
    <location>
        <begin position="27"/>
        <end position="208"/>
    </location>
</feature>
<feature type="region of interest" description="PAI subdomain" evidence="4">
    <location>
        <begin position="37"/>
        <end position="93"/>
    </location>
</feature>
<feature type="region of interest" description="RED subdomain" evidence="4">
    <location>
        <begin position="113"/>
        <end position="161"/>
    </location>
</feature>
<feature type="region of interest" description="Disordered" evidence="5">
    <location>
        <begin position="165"/>
        <end position="221"/>
    </location>
</feature>
<feature type="short sequence motif" description="OAR" evidence="3">
    <location>
        <begin position="477"/>
        <end position="489"/>
    </location>
</feature>
<feature type="compositionally biased region" description="Basic and acidic residues" evidence="5">
    <location>
        <begin position="165"/>
        <end position="186"/>
    </location>
</feature>
<feature type="modified residue" description="N6-acetyllysine" evidence="8">
    <location>
        <position position="105"/>
    </location>
</feature>
<feature type="modified residue" description="N6-acetyllysine" evidence="8">
    <location>
        <position position="139"/>
    </location>
</feature>
<feature type="mutagenesis site" description="Abolished acetylation by KAT8, leading to reduced transcription factor activity; when associated with R-139." evidence="8">
    <original>K</original>
    <variation>R</variation>
    <location>
        <position position="105"/>
    </location>
</feature>
<feature type="mutagenesis site" description="Abolished acetylation by KAT8, leading to reduced transcription factor activity; when associated with R-105." evidence="8">
    <original>K</original>
    <variation>R</variation>
    <location>
        <position position="139"/>
    </location>
</feature>
<feature type="sequence conflict" description="In Ref. 2; AAA64491." evidence="10" ref="2">
    <original>V</original>
    <variation>VV</variation>
    <location>
        <position position="60"/>
    </location>
</feature>
<feature type="sequence conflict" description="In Ref. 2; AAA64491." evidence="10" ref="2">
    <original>L</original>
    <variation>W</variation>
    <location>
        <position position="137"/>
    </location>
</feature>
<feature type="sequence conflict" description="In Ref. 2; AAA64491." evidence="10" ref="2">
    <original>D</original>
    <variation>G</variation>
    <location>
        <position position="202"/>
    </location>
</feature>
<feature type="sequence conflict" description="In Ref. 2; AAA64491." evidence="10" ref="2">
    <original>V</original>
    <variation>F</variation>
    <location>
        <position position="259"/>
    </location>
</feature>
<reference key="1">
    <citation type="journal article" date="2000" name="Cell">
        <title>Pax7 is required for the specification of myogenic satellite cells.</title>
        <authorList>
            <person name="Seale P."/>
            <person name="Sabourin L.A."/>
            <person name="Girgis-Gabardo A."/>
            <person name="Mansouri A."/>
            <person name="Gruss P."/>
            <person name="Rudnicki M.A."/>
        </authorList>
    </citation>
    <scope>NUCLEOTIDE SEQUENCE [MRNA]</scope>
    <source>
        <strain>BALB/cJ</strain>
        <tissue>Skeletal muscle</tissue>
    </source>
</reference>
<reference key="2">
    <citation type="journal article" date="1990" name="Mech. Dev.">
        <title>The murine paired box gene, Pax7, is expressed specifically during the development of the nervous and muscular system.</title>
        <authorList>
            <person name="Jostes B."/>
            <person name="Walther C."/>
            <person name="Gruss P."/>
        </authorList>
    </citation>
    <scope>NUCLEOTIDE SEQUENCE [MRNA] OF 36-324</scope>
    <scope>DEVELOPMENTAL STAGE</scope>
</reference>
<reference key="3">
    <citation type="journal article" date="2012" name="Cell Stem Cell">
        <title>Pax3/7BP is a Pax7- and Pax3-binding protein that regulates the proliferation of muscle precursor cells by an epigenetic mechanism.</title>
        <authorList>
            <person name="Diao Y."/>
            <person name="Guo X."/>
            <person name="Li Y."/>
            <person name="Sun K."/>
            <person name="Lu L."/>
            <person name="Jiang L."/>
            <person name="Fu X."/>
            <person name="Zhu H."/>
            <person name="Sun H."/>
            <person name="Wang H."/>
            <person name="Wu Z."/>
        </authorList>
    </citation>
    <scope>FUNCTION</scope>
    <scope>INTERACTION WITH PAXBP1</scope>
    <scope>REGION</scope>
    <scope>SUBCELLULAR LOCATION</scope>
</reference>
<reference key="4">
    <citation type="journal article" date="2021" name="Nat. Commun.">
        <title>Acetylation of PAX7 controls muscle stem cell self-renewal and differentiation potential in mice.</title>
        <authorList>
            <person name="Sincennes M.C."/>
            <person name="Brun C.E."/>
            <person name="Lin A.Y.T."/>
            <person name="Rosembert T."/>
            <person name="Datzkiw D."/>
            <person name="Saber J."/>
            <person name="Ming H."/>
            <person name="Kawabe Y.I."/>
            <person name="Rudnicki M.A."/>
        </authorList>
    </citation>
    <scope>FUNCTION</scope>
    <scope>SUBCELLULAR LOCATION</scope>
    <scope>ACETYLATION AT LYS-105 AND LYS-139</scope>
    <scope>MUTAGENESIS OF LYS-105 AND LYS-139</scope>
</reference>
<protein>
    <recommendedName>
        <fullName evidence="10">Paired box protein Pax-7</fullName>
    </recommendedName>
</protein>
<accession>P47239</accession>
<accession>Q9ES16</accession>
<sequence>MAALPGAVPRMMRPGPGQNYPRTGFPLEVSTPLGQGRVNQLGGVFINGRPLPNHIRHKIVEMAHHGIRPCVISRQLRVSHGCVSKILCRYQETGSIRPGAIGGSKPRQVATPDVEKKIEEYKRENPGMFSWEIRDRLLKDGHCDRSTVPSVSSISRVLRIKFGKKEDDEEGDKKEEDGEKKAKHSIDGILGDKGNRLDEGSDVESEPDLPLKRKQRRSRTTFTAEQLEELEKAFERTHYPDIYTREELAQRTKLTEARVQVWFSNRRARWRKQAGANQLAAFNHLLPGGFPPTGMPTLPPYQLPDSTYPTTTISQDGGSTVHRPQPLPPSTMHQGGLAAAAAAADTSSAYGARHSFSSYSDSFMNPGAPSNHMNPVSNGLSPQVMSILSNPSAVPPQPQADFSISPLHGGLDSASSISASCSQRADSIKPGDSLPTSQSYCPPTYSTTGYSVDPVAGYQYSQYGQTAVDYLAKNVSLSTQRRMKLGEHSAVLGLLPVETGQAY</sequence>
<keyword id="KW-0007">Acetylation</keyword>
<keyword id="KW-0217">Developmental protein</keyword>
<keyword id="KW-0238">DNA-binding</keyword>
<keyword id="KW-0371">Homeobox</keyword>
<keyword id="KW-0517">Myogenesis</keyword>
<keyword id="KW-0539">Nucleus</keyword>
<keyword id="KW-0563">Paired box</keyword>
<keyword id="KW-1185">Reference proteome</keyword>
<keyword id="KW-0804">Transcription</keyword>
<keyword id="KW-0805">Transcription regulation</keyword>
<proteinExistence type="evidence at protein level"/>
<gene>
    <name evidence="9" type="primary">Pax7</name>
    <name type="synonym">Pax-7</name>
</gene>
<dbReference type="EMBL" id="AF254422">
    <property type="protein sequence ID" value="AAG16663.3"/>
    <property type="molecule type" value="mRNA"/>
</dbReference>
<dbReference type="EMBL" id="U20792">
    <property type="protein sequence ID" value="AAA64491.1"/>
    <property type="molecule type" value="mRNA"/>
</dbReference>
<dbReference type="CCDS" id="CCDS18850.1"/>
<dbReference type="PIR" id="I49265">
    <property type="entry name" value="I49265"/>
</dbReference>
<dbReference type="RefSeq" id="NP_035169.1">
    <property type="nucleotide sequence ID" value="NM_011039.3"/>
</dbReference>
<dbReference type="SMR" id="P47239"/>
<dbReference type="BioGRID" id="202034">
    <property type="interactions" value="7"/>
</dbReference>
<dbReference type="CORUM" id="P47239"/>
<dbReference type="FunCoup" id="P47239">
    <property type="interactions" value="307"/>
</dbReference>
<dbReference type="STRING" id="10090.ENSMUSP00000030508"/>
<dbReference type="iPTMnet" id="P47239"/>
<dbReference type="PhosphoSitePlus" id="P47239"/>
<dbReference type="PaxDb" id="10090-ENSMUSP00000030508"/>
<dbReference type="Antibodypedia" id="14724">
    <property type="antibodies" value="756 antibodies from 41 providers"/>
</dbReference>
<dbReference type="DNASU" id="18509"/>
<dbReference type="Ensembl" id="ENSMUST00000030508.14">
    <property type="protein sequence ID" value="ENSMUSP00000030508.7"/>
    <property type="gene ID" value="ENSMUSG00000028736.14"/>
</dbReference>
<dbReference type="GeneID" id="18509"/>
<dbReference type="KEGG" id="mmu:18509"/>
<dbReference type="UCSC" id="uc008vms.1">
    <property type="organism name" value="mouse"/>
</dbReference>
<dbReference type="AGR" id="MGI:97491"/>
<dbReference type="CTD" id="5081"/>
<dbReference type="MGI" id="MGI:97491">
    <property type="gene designation" value="Pax7"/>
</dbReference>
<dbReference type="VEuPathDB" id="HostDB:ENSMUSG00000028736"/>
<dbReference type="eggNOG" id="KOG0849">
    <property type="taxonomic scope" value="Eukaryota"/>
</dbReference>
<dbReference type="GeneTree" id="ENSGT00940000156759"/>
<dbReference type="HOGENOM" id="CLU_019281_8_0_1"/>
<dbReference type="InParanoid" id="P47239"/>
<dbReference type="OMA" id="SECLAPW"/>
<dbReference type="OrthoDB" id="6159439at2759"/>
<dbReference type="PhylomeDB" id="P47239"/>
<dbReference type="TreeFam" id="TF351610"/>
<dbReference type="BioGRID-ORCS" id="18509">
    <property type="hits" value="0 hits in 78 CRISPR screens"/>
</dbReference>
<dbReference type="ChiTaRS" id="Pax7">
    <property type="organism name" value="mouse"/>
</dbReference>
<dbReference type="PRO" id="PR:P47239"/>
<dbReference type="Proteomes" id="UP000000589">
    <property type="component" value="Chromosome 4"/>
</dbReference>
<dbReference type="RNAct" id="P47239">
    <property type="molecule type" value="protein"/>
</dbReference>
<dbReference type="Bgee" id="ENSMUSG00000028736">
    <property type="expression patterns" value="Expressed in superior colliculus and 85 other cell types or tissues"/>
</dbReference>
<dbReference type="ExpressionAtlas" id="P47239">
    <property type="expression patterns" value="baseline and differential"/>
</dbReference>
<dbReference type="GO" id="GO:0005634">
    <property type="term" value="C:nucleus"/>
    <property type="evidence" value="ECO:0000314"/>
    <property type="project" value="UniProtKB"/>
</dbReference>
<dbReference type="GO" id="GO:0005667">
    <property type="term" value="C:transcription regulator complex"/>
    <property type="evidence" value="ECO:0000304"/>
    <property type="project" value="MGI"/>
</dbReference>
<dbReference type="GO" id="GO:0003700">
    <property type="term" value="F:DNA-binding transcription factor activity"/>
    <property type="evidence" value="ECO:0000314"/>
    <property type="project" value="UniProtKB"/>
</dbReference>
<dbReference type="GO" id="GO:0000981">
    <property type="term" value="F:DNA-binding transcription factor activity, RNA polymerase II-specific"/>
    <property type="evidence" value="ECO:0000314"/>
    <property type="project" value="MGI"/>
</dbReference>
<dbReference type="GO" id="GO:0043565">
    <property type="term" value="F:sequence-specific DNA binding"/>
    <property type="evidence" value="ECO:0000314"/>
    <property type="project" value="MGI"/>
</dbReference>
<dbReference type="GO" id="GO:1990837">
    <property type="term" value="F:sequence-specific double-stranded DNA binding"/>
    <property type="evidence" value="ECO:0007669"/>
    <property type="project" value="Ensembl"/>
</dbReference>
<dbReference type="GO" id="GO:0009887">
    <property type="term" value="P:animal organ morphogenesis"/>
    <property type="evidence" value="ECO:0000304"/>
    <property type="project" value="MGI"/>
</dbReference>
<dbReference type="GO" id="GO:0051216">
    <property type="term" value="P:cartilage development"/>
    <property type="evidence" value="ECO:0000315"/>
    <property type="project" value="MGI"/>
</dbReference>
<dbReference type="GO" id="GO:0006338">
    <property type="term" value="P:chromatin remodeling"/>
    <property type="evidence" value="ECO:0000315"/>
    <property type="project" value="MGI"/>
</dbReference>
<dbReference type="GO" id="GO:0021904">
    <property type="term" value="P:dorsal/ventral neural tube patterning"/>
    <property type="evidence" value="ECO:0000314"/>
    <property type="project" value="MGI"/>
</dbReference>
<dbReference type="GO" id="GO:0048706">
    <property type="term" value="P:embryonic skeletal system development"/>
    <property type="evidence" value="ECO:0000315"/>
    <property type="project" value="MGI"/>
</dbReference>
<dbReference type="GO" id="GO:0060415">
    <property type="term" value="P:muscle tissue morphogenesis"/>
    <property type="evidence" value="ECO:0000316"/>
    <property type="project" value="MGI"/>
</dbReference>
<dbReference type="GO" id="GO:0048663">
    <property type="term" value="P:neuron fate commitment"/>
    <property type="evidence" value="ECO:0000316"/>
    <property type="project" value="MGI"/>
</dbReference>
<dbReference type="GO" id="GO:2000288">
    <property type="term" value="P:positive regulation of myoblast proliferation"/>
    <property type="evidence" value="ECO:0000315"/>
    <property type="project" value="MGI"/>
</dbReference>
<dbReference type="GO" id="GO:0045944">
    <property type="term" value="P:positive regulation of transcription by RNA polymerase II"/>
    <property type="evidence" value="ECO:0000315"/>
    <property type="project" value="MGI"/>
</dbReference>
<dbReference type="GO" id="GO:0010453">
    <property type="term" value="P:regulation of cell fate commitment"/>
    <property type="evidence" value="ECO:0000315"/>
    <property type="project" value="MGI"/>
</dbReference>
<dbReference type="GO" id="GO:1902275">
    <property type="term" value="P:regulation of chromatin organization"/>
    <property type="evidence" value="ECO:0000314"/>
    <property type="project" value="MGI"/>
</dbReference>
<dbReference type="GO" id="GO:0006355">
    <property type="term" value="P:regulation of DNA-templated transcription"/>
    <property type="evidence" value="ECO:0000304"/>
    <property type="project" value="MGI"/>
</dbReference>
<dbReference type="GO" id="GO:0010468">
    <property type="term" value="P:regulation of gene expression"/>
    <property type="evidence" value="ECO:0000315"/>
    <property type="project" value="MGI"/>
</dbReference>
<dbReference type="GO" id="GO:0014813">
    <property type="term" value="P:skeletal muscle satellite cell commitment"/>
    <property type="evidence" value="ECO:0000315"/>
    <property type="project" value="MGI"/>
</dbReference>
<dbReference type="GO" id="GO:0014816">
    <property type="term" value="P:skeletal muscle satellite cell differentiation"/>
    <property type="evidence" value="ECO:0000314"/>
    <property type="project" value="UniProtKB"/>
</dbReference>
<dbReference type="GO" id="GO:0007519">
    <property type="term" value="P:skeletal muscle tissue development"/>
    <property type="evidence" value="ECO:0000315"/>
    <property type="project" value="MGI"/>
</dbReference>
<dbReference type="GO" id="GO:0043403">
    <property type="term" value="P:skeletal muscle tissue regeneration"/>
    <property type="evidence" value="ECO:0000315"/>
    <property type="project" value="MGI"/>
</dbReference>
<dbReference type="GO" id="GO:0021527">
    <property type="term" value="P:spinal cord association neuron differentiation"/>
    <property type="evidence" value="ECO:0000316"/>
    <property type="project" value="MGI"/>
</dbReference>
<dbReference type="GO" id="GO:0006366">
    <property type="term" value="P:transcription by RNA polymerase II"/>
    <property type="evidence" value="ECO:0000315"/>
    <property type="project" value="MGI"/>
</dbReference>
<dbReference type="CDD" id="cd00086">
    <property type="entry name" value="homeodomain"/>
    <property type="match status" value="1"/>
</dbReference>
<dbReference type="CDD" id="cd00131">
    <property type="entry name" value="PAX"/>
    <property type="match status" value="1"/>
</dbReference>
<dbReference type="FunFam" id="1.10.10.10:FF:000080">
    <property type="entry name" value="paired box protein Pax-3 isoform X2"/>
    <property type="match status" value="1"/>
</dbReference>
<dbReference type="FunFam" id="1.10.10.60:FF:000035">
    <property type="entry name" value="paired box protein Pax-3 isoform X2"/>
    <property type="match status" value="1"/>
</dbReference>
<dbReference type="FunFam" id="1.10.10.10:FF:000031">
    <property type="entry name" value="Paired box protein Pax-7"/>
    <property type="match status" value="1"/>
</dbReference>
<dbReference type="Gene3D" id="1.10.10.60">
    <property type="entry name" value="Homeodomain-like"/>
    <property type="match status" value="1"/>
</dbReference>
<dbReference type="Gene3D" id="1.10.10.10">
    <property type="entry name" value="Winged helix-like DNA-binding domain superfamily/Winged helix DNA-binding domain"/>
    <property type="match status" value="2"/>
</dbReference>
<dbReference type="InterPro" id="IPR001356">
    <property type="entry name" value="HD"/>
</dbReference>
<dbReference type="InterPro" id="IPR017970">
    <property type="entry name" value="Homeobox_CS"/>
</dbReference>
<dbReference type="InterPro" id="IPR009057">
    <property type="entry name" value="Homeodomain-like_sf"/>
</dbReference>
<dbReference type="InterPro" id="IPR003654">
    <property type="entry name" value="OAR_dom"/>
</dbReference>
<dbReference type="InterPro" id="IPR043182">
    <property type="entry name" value="PAIRED_DNA-bd_dom"/>
</dbReference>
<dbReference type="InterPro" id="IPR001523">
    <property type="entry name" value="Paired_dom"/>
</dbReference>
<dbReference type="InterPro" id="IPR022106">
    <property type="entry name" value="Pax7_C"/>
</dbReference>
<dbReference type="InterPro" id="IPR043565">
    <property type="entry name" value="PAX_fam"/>
</dbReference>
<dbReference type="InterPro" id="IPR036388">
    <property type="entry name" value="WH-like_DNA-bd_sf"/>
</dbReference>
<dbReference type="PANTHER" id="PTHR45636">
    <property type="entry name" value="PAIRED BOX PROTEIN PAX-6-RELATED-RELATED"/>
    <property type="match status" value="1"/>
</dbReference>
<dbReference type="PANTHER" id="PTHR45636:SF26">
    <property type="entry name" value="PAIRED BOX PROTEIN PAX-7"/>
    <property type="match status" value="1"/>
</dbReference>
<dbReference type="Pfam" id="PF00046">
    <property type="entry name" value="Homeodomain"/>
    <property type="match status" value="1"/>
</dbReference>
<dbReference type="Pfam" id="PF00292">
    <property type="entry name" value="PAX"/>
    <property type="match status" value="1"/>
</dbReference>
<dbReference type="Pfam" id="PF12360">
    <property type="entry name" value="Pax7"/>
    <property type="match status" value="1"/>
</dbReference>
<dbReference type="PRINTS" id="PR00027">
    <property type="entry name" value="PAIREDBOX"/>
</dbReference>
<dbReference type="SMART" id="SM00389">
    <property type="entry name" value="HOX"/>
    <property type="match status" value="1"/>
</dbReference>
<dbReference type="SMART" id="SM00351">
    <property type="entry name" value="PAX"/>
    <property type="match status" value="1"/>
</dbReference>
<dbReference type="SUPFAM" id="SSF46689">
    <property type="entry name" value="Homeodomain-like"/>
    <property type="match status" value="2"/>
</dbReference>
<dbReference type="PROSITE" id="PS00027">
    <property type="entry name" value="HOMEOBOX_1"/>
    <property type="match status" value="1"/>
</dbReference>
<dbReference type="PROSITE" id="PS50071">
    <property type="entry name" value="HOMEOBOX_2"/>
    <property type="match status" value="1"/>
</dbReference>
<dbReference type="PROSITE" id="PS50803">
    <property type="entry name" value="OAR"/>
    <property type="match status" value="1"/>
</dbReference>
<dbReference type="PROSITE" id="PS00034">
    <property type="entry name" value="PAIRED_1"/>
    <property type="match status" value="1"/>
</dbReference>
<dbReference type="PROSITE" id="PS51057">
    <property type="entry name" value="PAIRED_2"/>
    <property type="match status" value="1"/>
</dbReference>
<evidence type="ECO:0000250" key="1">
    <source>
        <dbReference type="UniProtKB" id="P23759"/>
    </source>
</evidence>
<evidence type="ECO:0000255" key="2">
    <source>
        <dbReference type="PROSITE-ProRule" id="PRU00108"/>
    </source>
</evidence>
<evidence type="ECO:0000255" key="3">
    <source>
        <dbReference type="PROSITE-ProRule" id="PRU00138"/>
    </source>
</evidence>
<evidence type="ECO:0000255" key="4">
    <source>
        <dbReference type="PROSITE-ProRule" id="PRU00381"/>
    </source>
</evidence>
<evidence type="ECO:0000256" key="5">
    <source>
        <dbReference type="SAM" id="MobiDB-lite"/>
    </source>
</evidence>
<evidence type="ECO:0000269" key="6">
    <source>
    </source>
</evidence>
<evidence type="ECO:0000269" key="7">
    <source>
    </source>
</evidence>
<evidence type="ECO:0000269" key="8">
    <source>
    </source>
</evidence>
<evidence type="ECO:0000303" key="9">
    <source>
    </source>
</evidence>
<evidence type="ECO:0000305" key="10"/>
<organism>
    <name type="scientific">Mus musculus</name>
    <name type="common">Mouse</name>
    <dbReference type="NCBI Taxonomy" id="10090"/>
    <lineage>
        <taxon>Eukaryota</taxon>
        <taxon>Metazoa</taxon>
        <taxon>Chordata</taxon>
        <taxon>Craniata</taxon>
        <taxon>Vertebrata</taxon>
        <taxon>Euteleostomi</taxon>
        <taxon>Mammalia</taxon>
        <taxon>Eutheria</taxon>
        <taxon>Euarchontoglires</taxon>
        <taxon>Glires</taxon>
        <taxon>Rodentia</taxon>
        <taxon>Myomorpha</taxon>
        <taxon>Muroidea</taxon>
        <taxon>Muridae</taxon>
        <taxon>Murinae</taxon>
        <taxon>Mus</taxon>
        <taxon>Mus</taxon>
    </lineage>
</organism>